<dbReference type="EMBL" id="CP000051">
    <property type="protein sequence ID" value="AAX50566.1"/>
    <property type="molecule type" value="Genomic_DNA"/>
</dbReference>
<dbReference type="RefSeq" id="WP_009871653.1">
    <property type="nucleotide sequence ID" value="NC_007429.1"/>
</dbReference>
<dbReference type="SMR" id="Q3KM56"/>
<dbReference type="KEGG" id="cta:CTA_0328"/>
<dbReference type="HOGENOM" id="CLU_113661_0_0_0"/>
<dbReference type="Proteomes" id="UP000002532">
    <property type="component" value="Chromosome"/>
</dbReference>
<dbReference type="GO" id="GO:0005524">
    <property type="term" value="F:ATP binding"/>
    <property type="evidence" value="ECO:0007669"/>
    <property type="project" value="UniProtKB-UniRule"/>
</dbReference>
<dbReference type="GO" id="GO:0046933">
    <property type="term" value="F:proton-transporting ATP synthase activity, rotational mechanism"/>
    <property type="evidence" value="ECO:0007669"/>
    <property type="project" value="UniProtKB-UniRule"/>
</dbReference>
<dbReference type="GO" id="GO:0046961">
    <property type="term" value="F:proton-transporting ATPase activity, rotational mechanism"/>
    <property type="evidence" value="ECO:0007669"/>
    <property type="project" value="InterPro"/>
</dbReference>
<dbReference type="GO" id="GO:0042777">
    <property type="term" value="P:proton motive force-driven plasma membrane ATP synthesis"/>
    <property type="evidence" value="ECO:0007669"/>
    <property type="project" value="UniProtKB-UniRule"/>
</dbReference>
<dbReference type="FunFam" id="1.10.287.3240:FF:000014">
    <property type="entry name" value="V-type ATP synthase subunit D"/>
    <property type="match status" value="1"/>
</dbReference>
<dbReference type="Gene3D" id="1.10.287.3240">
    <property type="match status" value="1"/>
</dbReference>
<dbReference type="HAMAP" id="MF_00271">
    <property type="entry name" value="ATP_synth_D_arch"/>
    <property type="match status" value="1"/>
</dbReference>
<dbReference type="InterPro" id="IPR002699">
    <property type="entry name" value="V_ATPase_D"/>
</dbReference>
<dbReference type="NCBIfam" id="NF002565">
    <property type="entry name" value="PRK02195.1"/>
    <property type="match status" value="1"/>
</dbReference>
<dbReference type="NCBIfam" id="TIGR00309">
    <property type="entry name" value="V_ATPase_subD"/>
    <property type="match status" value="1"/>
</dbReference>
<dbReference type="PANTHER" id="PTHR11671">
    <property type="entry name" value="V-TYPE ATP SYNTHASE SUBUNIT D"/>
    <property type="match status" value="1"/>
</dbReference>
<dbReference type="Pfam" id="PF01813">
    <property type="entry name" value="ATP-synt_D"/>
    <property type="match status" value="1"/>
</dbReference>
<name>VATD_CHLTA</name>
<organism>
    <name type="scientific">Chlamydia trachomatis serovar A (strain ATCC VR-571B / DSM 19440 / HAR-13)</name>
    <dbReference type="NCBI Taxonomy" id="315277"/>
    <lineage>
        <taxon>Bacteria</taxon>
        <taxon>Pseudomonadati</taxon>
        <taxon>Chlamydiota</taxon>
        <taxon>Chlamydiia</taxon>
        <taxon>Chlamydiales</taxon>
        <taxon>Chlamydiaceae</taxon>
        <taxon>Chlamydia/Chlamydophila group</taxon>
        <taxon>Chlamydia</taxon>
    </lineage>
</organism>
<evidence type="ECO:0000255" key="1">
    <source>
        <dbReference type="HAMAP-Rule" id="MF_00271"/>
    </source>
</evidence>
<feature type="chain" id="PRO_1000059150" description="V-type ATP synthase subunit D">
    <location>
        <begin position="1"/>
        <end position="203"/>
    </location>
</feature>
<comment type="function">
    <text evidence="1">Produces ATP from ADP in the presence of a proton gradient across the membrane.</text>
</comment>
<comment type="similarity">
    <text evidence="1">Belongs to the V-ATPase D subunit family.</text>
</comment>
<sequence length="203" mass="23182">MSSQIKLTKNSYRAEKQKLNMLGMYLPTLKLKKALLQAEVQSAIRLAAESTATNEQARDRMYAFAELFSIPLYTDAVEQCFSVDILEKDVENIAGVEVPLLKRVVLTSPEYSLLDTPIWLDSLLASVKEYVVSKIYAENAQERLLLLEEELRRVSIRVNLFEKKLIPTTSQTLKKIAIFLSDRSITDVGQMKMAKKKIQQHKE</sequence>
<keyword id="KW-0066">ATP synthesis</keyword>
<keyword id="KW-0375">Hydrogen ion transport</keyword>
<keyword id="KW-0406">Ion transport</keyword>
<keyword id="KW-0813">Transport</keyword>
<reference key="1">
    <citation type="journal article" date="2005" name="Infect. Immun.">
        <title>Comparative genomic analysis of Chlamydia trachomatis oculotropic and genitotropic strains.</title>
        <authorList>
            <person name="Carlson J.H."/>
            <person name="Porcella S.F."/>
            <person name="McClarty G."/>
            <person name="Caldwell H.D."/>
        </authorList>
    </citation>
    <scope>NUCLEOTIDE SEQUENCE [LARGE SCALE GENOMIC DNA]</scope>
    <source>
        <strain>ATCC VR-571B / DSM 19440 / HAR-13</strain>
    </source>
</reference>
<accession>Q3KM56</accession>
<gene>
    <name evidence="1" type="primary">atpD</name>
    <name type="ordered locus">CTA_0328</name>
</gene>
<protein>
    <recommendedName>
        <fullName evidence="1">V-type ATP synthase subunit D</fullName>
    </recommendedName>
    <alternativeName>
        <fullName evidence="1">V-ATPase subunit D</fullName>
    </alternativeName>
</protein>
<proteinExistence type="inferred from homology"/>